<protein>
    <recommendedName>
        <fullName evidence="1">ATP synthase epsilon chain</fullName>
    </recommendedName>
    <alternativeName>
        <fullName evidence="1">ATP synthase F1 sector epsilon subunit</fullName>
    </alternativeName>
    <alternativeName>
        <fullName evidence="1">F-ATPase epsilon subunit</fullName>
    </alternativeName>
</protein>
<keyword id="KW-0066">ATP synthesis</keyword>
<keyword id="KW-0997">Cell inner membrane</keyword>
<keyword id="KW-1003">Cell membrane</keyword>
<keyword id="KW-0139">CF(1)</keyword>
<keyword id="KW-0375">Hydrogen ion transport</keyword>
<keyword id="KW-0406">Ion transport</keyword>
<keyword id="KW-0472">Membrane</keyword>
<keyword id="KW-1185">Reference proteome</keyword>
<keyword id="KW-0813">Transport</keyword>
<proteinExistence type="inferred from homology"/>
<comment type="function">
    <text evidence="1">Produces ATP from ADP in the presence of a proton gradient across the membrane.</text>
</comment>
<comment type="subunit">
    <text>F-type ATPases have 2 components, CF(1) - the catalytic core - and CF(0) - the membrane proton channel. CF(1) has five subunits: alpha(3), beta(3), gamma(1), delta(1), epsilon(1). CF(0) has three main subunits: a, b and c.</text>
</comment>
<comment type="subcellular location">
    <subcellularLocation>
        <location evidence="1">Cell inner membrane</location>
        <topology evidence="1">Peripheral membrane protein</topology>
    </subcellularLocation>
</comment>
<comment type="similarity">
    <text evidence="1">Belongs to the ATPase epsilon chain family.</text>
</comment>
<sequence>MEKSLHLEIVTPDKLVLSEQVDYVGAPGFEGEFGVLPSHIPFLSALAIGSLYYKANGKTHHVFVSGGFAEVSDNKVTVLAESAERAEDIDIDRARKAKDRAEQRLAQIKEKVDHARAQAALQRALARMRVRGNA</sequence>
<evidence type="ECO:0000255" key="1">
    <source>
        <dbReference type="HAMAP-Rule" id="MF_00530"/>
    </source>
</evidence>
<name>ATPE_NITV2</name>
<reference key="1">
    <citation type="journal article" date="2004" name="Nat. Biotechnol.">
        <title>The genome sequence of the anaerobic, sulfate-reducing bacterium Desulfovibrio vulgaris Hildenborough.</title>
        <authorList>
            <person name="Heidelberg J.F."/>
            <person name="Seshadri R."/>
            <person name="Haveman S.A."/>
            <person name="Hemme C.L."/>
            <person name="Paulsen I.T."/>
            <person name="Kolonay J.F."/>
            <person name="Eisen J.A."/>
            <person name="Ward N.L."/>
            <person name="Methe B.A."/>
            <person name="Brinkac L.M."/>
            <person name="Daugherty S.C."/>
            <person name="DeBoy R.T."/>
            <person name="Dodson R.J."/>
            <person name="Durkin A.S."/>
            <person name="Madupu R."/>
            <person name="Nelson W.C."/>
            <person name="Sullivan S.A."/>
            <person name="Fouts D.E."/>
            <person name="Haft D.H."/>
            <person name="Selengut J."/>
            <person name="Peterson J.D."/>
            <person name="Davidsen T.M."/>
            <person name="Zafar N."/>
            <person name="Zhou L."/>
            <person name="Radune D."/>
            <person name="Dimitrov G."/>
            <person name="Hance M."/>
            <person name="Tran K."/>
            <person name="Khouri H.M."/>
            <person name="Gill J."/>
            <person name="Utterback T.R."/>
            <person name="Feldblyum T.V."/>
            <person name="Wall J.D."/>
            <person name="Voordouw G."/>
            <person name="Fraser C.M."/>
        </authorList>
    </citation>
    <scope>NUCLEOTIDE SEQUENCE [LARGE SCALE GENOMIC DNA]</scope>
    <source>
        <strain>ATCC 29579 / DSM 644 / CCUG 34227 / NCIMB 8303 / VKM B-1760 / Hildenborough</strain>
    </source>
</reference>
<gene>
    <name evidence="1" type="primary">atpC</name>
    <name type="ordered locus">DVU_0774</name>
</gene>
<feature type="chain" id="PRO_0000188130" description="ATP synthase epsilon chain">
    <location>
        <begin position="1"/>
        <end position="134"/>
    </location>
</feature>
<dbReference type="EMBL" id="AE017285">
    <property type="protein sequence ID" value="AAS95254.1"/>
    <property type="molecule type" value="Genomic_DNA"/>
</dbReference>
<dbReference type="RefSeq" id="WP_010938075.1">
    <property type="nucleotide sequence ID" value="NC_002937.3"/>
</dbReference>
<dbReference type="RefSeq" id="YP_009995.1">
    <property type="nucleotide sequence ID" value="NC_002937.3"/>
</dbReference>
<dbReference type="SMR" id="Q72E05"/>
<dbReference type="IntAct" id="Q72E05">
    <property type="interactions" value="6"/>
</dbReference>
<dbReference type="STRING" id="882.DVU_0774"/>
<dbReference type="PaxDb" id="882-DVU_0774"/>
<dbReference type="EnsemblBacteria" id="AAS95254">
    <property type="protein sequence ID" value="AAS95254"/>
    <property type="gene ID" value="DVU_0774"/>
</dbReference>
<dbReference type="KEGG" id="dvu:DVU_0774"/>
<dbReference type="PATRIC" id="fig|882.5.peg.729"/>
<dbReference type="eggNOG" id="COG0355">
    <property type="taxonomic scope" value="Bacteria"/>
</dbReference>
<dbReference type="HOGENOM" id="CLU_084338_1_3_7"/>
<dbReference type="OrthoDB" id="9799969at2"/>
<dbReference type="PhylomeDB" id="Q72E05"/>
<dbReference type="Proteomes" id="UP000002194">
    <property type="component" value="Chromosome"/>
</dbReference>
<dbReference type="GO" id="GO:0005886">
    <property type="term" value="C:plasma membrane"/>
    <property type="evidence" value="ECO:0007669"/>
    <property type="project" value="UniProtKB-SubCell"/>
</dbReference>
<dbReference type="GO" id="GO:0045259">
    <property type="term" value="C:proton-transporting ATP synthase complex"/>
    <property type="evidence" value="ECO:0007669"/>
    <property type="project" value="UniProtKB-KW"/>
</dbReference>
<dbReference type="GO" id="GO:0005524">
    <property type="term" value="F:ATP binding"/>
    <property type="evidence" value="ECO:0007669"/>
    <property type="project" value="UniProtKB-UniRule"/>
</dbReference>
<dbReference type="GO" id="GO:0046933">
    <property type="term" value="F:proton-transporting ATP synthase activity, rotational mechanism"/>
    <property type="evidence" value="ECO:0007669"/>
    <property type="project" value="UniProtKB-UniRule"/>
</dbReference>
<dbReference type="CDD" id="cd12152">
    <property type="entry name" value="F1-ATPase_delta"/>
    <property type="match status" value="1"/>
</dbReference>
<dbReference type="FunFam" id="1.20.5.440:FF:000001">
    <property type="entry name" value="ATP synthase epsilon chain"/>
    <property type="match status" value="1"/>
</dbReference>
<dbReference type="Gene3D" id="1.20.5.440">
    <property type="entry name" value="ATP synthase delta/epsilon subunit, C-terminal domain"/>
    <property type="match status" value="1"/>
</dbReference>
<dbReference type="Gene3D" id="2.60.15.10">
    <property type="entry name" value="F0F1 ATP synthase delta/epsilon subunit, N-terminal"/>
    <property type="match status" value="1"/>
</dbReference>
<dbReference type="HAMAP" id="MF_00530">
    <property type="entry name" value="ATP_synth_epsil_bac"/>
    <property type="match status" value="1"/>
</dbReference>
<dbReference type="InterPro" id="IPR036794">
    <property type="entry name" value="ATP_F1_dsu/esu_C_sf"/>
</dbReference>
<dbReference type="InterPro" id="IPR001469">
    <property type="entry name" value="ATP_synth_F1_dsu/esu"/>
</dbReference>
<dbReference type="InterPro" id="IPR020546">
    <property type="entry name" value="ATP_synth_F1_dsu/esu_N"/>
</dbReference>
<dbReference type="InterPro" id="IPR020547">
    <property type="entry name" value="ATP_synth_F1_esu_C"/>
</dbReference>
<dbReference type="InterPro" id="IPR036771">
    <property type="entry name" value="ATPsynth_dsu/esu_N"/>
</dbReference>
<dbReference type="NCBIfam" id="TIGR01216">
    <property type="entry name" value="ATP_synt_epsi"/>
    <property type="match status" value="1"/>
</dbReference>
<dbReference type="NCBIfam" id="NF001846">
    <property type="entry name" value="PRK00571.1-3"/>
    <property type="match status" value="1"/>
</dbReference>
<dbReference type="NCBIfam" id="NF009980">
    <property type="entry name" value="PRK13446.1"/>
    <property type="match status" value="1"/>
</dbReference>
<dbReference type="PANTHER" id="PTHR13822">
    <property type="entry name" value="ATP SYNTHASE DELTA/EPSILON CHAIN"/>
    <property type="match status" value="1"/>
</dbReference>
<dbReference type="PANTHER" id="PTHR13822:SF10">
    <property type="entry name" value="ATP SYNTHASE EPSILON CHAIN, CHLOROPLASTIC"/>
    <property type="match status" value="1"/>
</dbReference>
<dbReference type="Pfam" id="PF00401">
    <property type="entry name" value="ATP-synt_DE"/>
    <property type="match status" value="1"/>
</dbReference>
<dbReference type="Pfam" id="PF02823">
    <property type="entry name" value="ATP-synt_DE_N"/>
    <property type="match status" value="1"/>
</dbReference>
<dbReference type="SUPFAM" id="SSF46604">
    <property type="entry name" value="Epsilon subunit of F1F0-ATP synthase C-terminal domain"/>
    <property type="match status" value="1"/>
</dbReference>
<dbReference type="SUPFAM" id="SSF51344">
    <property type="entry name" value="Epsilon subunit of F1F0-ATP synthase N-terminal domain"/>
    <property type="match status" value="1"/>
</dbReference>
<organism>
    <name type="scientific">Nitratidesulfovibrio vulgaris (strain ATCC 29579 / DSM 644 / CCUG 34227 / NCIMB 8303 / VKM B-1760 / Hildenborough)</name>
    <name type="common">Desulfovibrio vulgaris</name>
    <dbReference type="NCBI Taxonomy" id="882"/>
    <lineage>
        <taxon>Bacteria</taxon>
        <taxon>Pseudomonadati</taxon>
        <taxon>Thermodesulfobacteriota</taxon>
        <taxon>Desulfovibrionia</taxon>
        <taxon>Desulfovibrionales</taxon>
        <taxon>Desulfovibrionaceae</taxon>
        <taxon>Nitratidesulfovibrio</taxon>
    </lineage>
</organism>
<accession>Q72E05</accession>